<evidence type="ECO:0000255" key="1">
    <source>
        <dbReference type="HAMAP-Rule" id="MF_00274"/>
    </source>
</evidence>
<evidence type="ECO:0000256" key="2">
    <source>
        <dbReference type="SAM" id="MobiDB-lite"/>
    </source>
</evidence>
<dbReference type="EMBL" id="AM286280">
    <property type="protein sequence ID" value="CAL08826.1"/>
    <property type="molecule type" value="Genomic_DNA"/>
</dbReference>
<dbReference type="RefSeq" id="WP_003029310.1">
    <property type="nucleotide sequence ID" value="NC_008245.1"/>
</dbReference>
<dbReference type="SMR" id="Q14I27"/>
<dbReference type="KEGG" id="ftf:FTF0810c"/>
<dbReference type="HOGENOM" id="CLU_140930_0_0_6"/>
<dbReference type="GO" id="GO:0043590">
    <property type="term" value="C:bacterial nucleoid"/>
    <property type="evidence" value="ECO:0007669"/>
    <property type="project" value="UniProtKB-UniRule"/>
</dbReference>
<dbReference type="GO" id="GO:0005829">
    <property type="term" value="C:cytosol"/>
    <property type="evidence" value="ECO:0007669"/>
    <property type="project" value="TreeGrafter"/>
</dbReference>
<dbReference type="GO" id="GO:0003677">
    <property type="term" value="F:DNA binding"/>
    <property type="evidence" value="ECO:0007669"/>
    <property type="project" value="UniProtKB-UniRule"/>
</dbReference>
<dbReference type="Gene3D" id="3.30.1310.10">
    <property type="entry name" value="Nucleoid-associated protein YbaB-like domain"/>
    <property type="match status" value="1"/>
</dbReference>
<dbReference type="HAMAP" id="MF_00274">
    <property type="entry name" value="DNA_YbaB_EbfC"/>
    <property type="match status" value="1"/>
</dbReference>
<dbReference type="InterPro" id="IPR036894">
    <property type="entry name" value="YbaB-like_sf"/>
</dbReference>
<dbReference type="InterPro" id="IPR004401">
    <property type="entry name" value="YbaB/EbfC"/>
</dbReference>
<dbReference type="NCBIfam" id="TIGR00103">
    <property type="entry name" value="DNA_YbaB_EbfC"/>
    <property type="match status" value="1"/>
</dbReference>
<dbReference type="PANTHER" id="PTHR33449">
    <property type="entry name" value="NUCLEOID-ASSOCIATED PROTEIN YBAB"/>
    <property type="match status" value="1"/>
</dbReference>
<dbReference type="PANTHER" id="PTHR33449:SF1">
    <property type="entry name" value="NUCLEOID-ASSOCIATED PROTEIN YBAB"/>
    <property type="match status" value="1"/>
</dbReference>
<dbReference type="Pfam" id="PF02575">
    <property type="entry name" value="YbaB_DNA_bd"/>
    <property type="match status" value="1"/>
</dbReference>
<dbReference type="PIRSF" id="PIRSF004555">
    <property type="entry name" value="UCP004555"/>
    <property type="match status" value="1"/>
</dbReference>
<dbReference type="SUPFAM" id="SSF82607">
    <property type="entry name" value="YbaB-like"/>
    <property type="match status" value="1"/>
</dbReference>
<accession>Q14I27</accession>
<organism>
    <name type="scientific">Francisella tularensis subsp. tularensis (strain FSC 198)</name>
    <dbReference type="NCBI Taxonomy" id="393115"/>
    <lineage>
        <taxon>Bacteria</taxon>
        <taxon>Pseudomonadati</taxon>
        <taxon>Pseudomonadota</taxon>
        <taxon>Gammaproteobacteria</taxon>
        <taxon>Thiotrichales</taxon>
        <taxon>Francisellaceae</taxon>
        <taxon>Francisella</taxon>
    </lineage>
</organism>
<keyword id="KW-0963">Cytoplasm</keyword>
<keyword id="KW-0238">DNA-binding</keyword>
<comment type="function">
    <text evidence="1">Binds to DNA and alters its conformation. May be involved in regulation of gene expression, nucleoid organization and DNA protection.</text>
</comment>
<comment type="subunit">
    <text evidence="1">Homodimer.</text>
</comment>
<comment type="subcellular location">
    <subcellularLocation>
        <location evidence="1">Cytoplasm</location>
        <location evidence="1">Nucleoid</location>
    </subcellularLocation>
</comment>
<comment type="similarity">
    <text evidence="1">Belongs to the YbaB/EbfC family.</text>
</comment>
<gene>
    <name type="ordered locus">FTF0810c</name>
</gene>
<protein>
    <recommendedName>
        <fullName evidence="1">Nucleoid-associated protein FTF0810c</fullName>
    </recommendedName>
</protein>
<name>Y810_FRAT1</name>
<feature type="chain" id="PRO_1000071913" description="Nucleoid-associated protein FTF0810c">
    <location>
        <begin position="1"/>
        <end position="112"/>
    </location>
</feature>
<feature type="region of interest" description="Disordered" evidence="2">
    <location>
        <begin position="1"/>
        <end position="27"/>
    </location>
</feature>
<feature type="compositionally biased region" description="Basic and acidic residues" evidence="2">
    <location>
        <begin position="17"/>
        <end position="27"/>
    </location>
</feature>
<sequence length="112" mass="12328">MNFDMSKLMQQAQKMQEQMKKAQQERENMEVIGESGAGLVTVTMTGKYDVKSVSIDNSLMSEDKEILEDLIAAAVNSAVKKVEENSTASSDIYKMAKDAGIDLPSGINFPFK</sequence>
<proteinExistence type="inferred from homology"/>
<reference key="1">
    <citation type="journal article" date="2007" name="PLoS ONE">
        <title>Genome sequencing shows that European isolates of Francisella tularensis subspecies tularensis are almost identical to US laboratory strain Schu S4.</title>
        <authorList>
            <person name="Chaudhuri R.R."/>
            <person name="Ren C.-P."/>
            <person name="Desmond L."/>
            <person name="Vincent G.A."/>
            <person name="Silman N.J."/>
            <person name="Brehm J.K."/>
            <person name="Elmore M.J."/>
            <person name="Hudson M.J."/>
            <person name="Forsman M."/>
            <person name="Isherwood K.E."/>
            <person name="Gurycova D."/>
            <person name="Minton N.P."/>
            <person name="Titball R.W."/>
            <person name="Pallen M.J."/>
            <person name="Vipond R."/>
        </authorList>
    </citation>
    <scope>NUCLEOTIDE SEQUENCE [LARGE SCALE GENOMIC DNA]</scope>
    <source>
        <strain>FSC 198</strain>
    </source>
</reference>